<sequence>MLNVTNLSFTYPRHSQPALKKLNFSLKPNTHVAIIGHNGSGKSTLVKLLGGFLKAPKQTIFFRGQPLEEVGFRQIGILLQDPDMQLLGDTLHQELIFSLENHGVDPKQMDRVIADVLAVVELQGKQFTPLSKLSFGEKQRAVFACLLAVKPELYLLDEAFSMLDGKLASKLKRFIFKVIKEQQKTVINVTHDFNDLFLADEIIFLSKGQLLKQFSPAAIYKQLHLFHQHHFTLPFPWLLAHEVADHLHHEMKGPIEELQDVVDWICKHLK</sequence>
<accession>P75355</accession>
<protein>
    <recommendedName>
        <fullName>Putative ABC transporter ATP-binding protein MG304 homolog</fullName>
    </recommendedName>
</protein>
<reference key="1">
    <citation type="journal article" date="1996" name="Nucleic Acids Res.">
        <title>Complete sequence analysis of the genome of the bacterium Mycoplasma pneumoniae.</title>
        <authorList>
            <person name="Himmelreich R."/>
            <person name="Hilbert H."/>
            <person name="Plagens H."/>
            <person name="Pirkl E."/>
            <person name="Li B.-C."/>
            <person name="Herrmann R."/>
        </authorList>
    </citation>
    <scope>NUCLEOTIDE SEQUENCE [LARGE SCALE GENOMIC DNA]</scope>
    <source>
        <strain>ATCC 29342 / M129 / Subtype 1</strain>
    </source>
</reference>
<keyword id="KW-0067">ATP-binding</keyword>
<keyword id="KW-0547">Nucleotide-binding</keyword>
<keyword id="KW-1185">Reference proteome</keyword>
<keyword id="KW-0813">Transport</keyword>
<gene>
    <name type="ordered locus">MPN_433</name>
    <name type="ORF">A05_orf270L</name>
    <name type="ORF">MP408</name>
</gene>
<proteinExistence type="inferred from homology"/>
<organism>
    <name type="scientific">Mycoplasma pneumoniae (strain ATCC 29342 / M129 / Subtype 1)</name>
    <name type="common">Mycoplasmoides pneumoniae</name>
    <dbReference type="NCBI Taxonomy" id="272634"/>
    <lineage>
        <taxon>Bacteria</taxon>
        <taxon>Bacillati</taxon>
        <taxon>Mycoplasmatota</taxon>
        <taxon>Mycoplasmoidales</taxon>
        <taxon>Mycoplasmoidaceae</taxon>
        <taxon>Mycoplasmoides</taxon>
    </lineage>
</organism>
<feature type="chain" id="PRO_0000093246" description="Putative ABC transporter ATP-binding protein MG304 homolog">
    <location>
        <begin position="1"/>
        <end position="270"/>
    </location>
</feature>
<feature type="domain" description="ABC transporter" evidence="1">
    <location>
        <begin position="2"/>
        <end position="232"/>
    </location>
</feature>
<feature type="binding site" evidence="1">
    <location>
        <begin position="36"/>
        <end position="43"/>
    </location>
    <ligand>
        <name>ATP</name>
        <dbReference type="ChEBI" id="CHEBI:30616"/>
    </ligand>
</feature>
<evidence type="ECO:0000255" key="1">
    <source>
        <dbReference type="PROSITE-ProRule" id="PRU00434"/>
    </source>
</evidence>
<evidence type="ECO:0000305" key="2"/>
<dbReference type="EMBL" id="U00089">
    <property type="protein sequence ID" value="AAB96056.1"/>
    <property type="molecule type" value="Genomic_DNA"/>
</dbReference>
<dbReference type="PIR" id="S73734">
    <property type="entry name" value="S73734"/>
</dbReference>
<dbReference type="RefSeq" id="NP_110121.1">
    <property type="nucleotide sequence ID" value="NC_000912.1"/>
</dbReference>
<dbReference type="RefSeq" id="WP_010874789.1">
    <property type="nucleotide sequence ID" value="NZ_OU342337.1"/>
</dbReference>
<dbReference type="SMR" id="P75355"/>
<dbReference type="STRING" id="272634.MPN_433"/>
<dbReference type="EnsemblBacteria" id="AAB96056">
    <property type="protein sequence ID" value="AAB96056"/>
    <property type="gene ID" value="MPN_433"/>
</dbReference>
<dbReference type="KEGG" id="mpn:MPN_433"/>
<dbReference type="PATRIC" id="fig|272634.6.peg.468"/>
<dbReference type="HOGENOM" id="CLU_000604_1_22_14"/>
<dbReference type="OrthoDB" id="399630at2"/>
<dbReference type="BioCyc" id="MPNE272634:G1GJ3-700-MONOMER"/>
<dbReference type="Proteomes" id="UP000000808">
    <property type="component" value="Chromosome"/>
</dbReference>
<dbReference type="GO" id="GO:0043190">
    <property type="term" value="C:ATP-binding cassette (ABC) transporter complex"/>
    <property type="evidence" value="ECO:0007669"/>
    <property type="project" value="TreeGrafter"/>
</dbReference>
<dbReference type="GO" id="GO:0005524">
    <property type="term" value="F:ATP binding"/>
    <property type="evidence" value="ECO:0007669"/>
    <property type="project" value="UniProtKB-KW"/>
</dbReference>
<dbReference type="GO" id="GO:0016887">
    <property type="term" value="F:ATP hydrolysis activity"/>
    <property type="evidence" value="ECO:0007669"/>
    <property type="project" value="InterPro"/>
</dbReference>
<dbReference type="GO" id="GO:0042626">
    <property type="term" value="F:ATPase-coupled transmembrane transporter activity"/>
    <property type="evidence" value="ECO:0007669"/>
    <property type="project" value="TreeGrafter"/>
</dbReference>
<dbReference type="CDD" id="cd03225">
    <property type="entry name" value="ABC_cobalt_CbiO_domain1"/>
    <property type="match status" value="1"/>
</dbReference>
<dbReference type="Gene3D" id="3.40.50.300">
    <property type="entry name" value="P-loop containing nucleotide triphosphate hydrolases"/>
    <property type="match status" value="1"/>
</dbReference>
<dbReference type="InterPro" id="IPR003593">
    <property type="entry name" value="AAA+_ATPase"/>
</dbReference>
<dbReference type="InterPro" id="IPR003439">
    <property type="entry name" value="ABC_transporter-like_ATP-bd"/>
</dbReference>
<dbReference type="InterPro" id="IPR017871">
    <property type="entry name" value="ABC_transporter-like_CS"/>
</dbReference>
<dbReference type="InterPro" id="IPR015856">
    <property type="entry name" value="ABC_transpr_CbiO/EcfA_su"/>
</dbReference>
<dbReference type="InterPro" id="IPR050095">
    <property type="entry name" value="ECF_ABC_transporter_ATP-bd"/>
</dbReference>
<dbReference type="InterPro" id="IPR027417">
    <property type="entry name" value="P-loop_NTPase"/>
</dbReference>
<dbReference type="PANTHER" id="PTHR43553:SF24">
    <property type="entry name" value="ENERGY-COUPLING FACTOR TRANSPORTER ATP-BINDING PROTEIN ECFA1"/>
    <property type="match status" value="1"/>
</dbReference>
<dbReference type="PANTHER" id="PTHR43553">
    <property type="entry name" value="HEAVY METAL TRANSPORTER"/>
    <property type="match status" value="1"/>
</dbReference>
<dbReference type="Pfam" id="PF00005">
    <property type="entry name" value="ABC_tran"/>
    <property type="match status" value="1"/>
</dbReference>
<dbReference type="SMART" id="SM00382">
    <property type="entry name" value="AAA"/>
    <property type="match status" value="1"/>
</dbReference>
<dbReference type="SUPFAM" id="SSF52540">
    <property type="entry name" value="P-loop containing nucleoside triphosphate hydrolases"/>
    <property type="match status" value="1"/>
</dbReference>
<dbReference type="PROSITE" id="PS00211">
    <property type="entry name" value="ABC_TRANSPORTER_1"/>
    <property type="match status" value="1"/>
</dbReference>
<dbReference type="PROSITE" id="PS50893">
    <property type="entry name" value="ABC_TRANSPORTER_2"/>
    <property type="match status" value="1"/>
</dbReference>
<comment type="similarity">
    <text evidence="2">Belongs to the ABC transporter superfamily.</text>
</comment>
<name>Y433_MYCPN</name>